<reference key="1">
    <citation type="journal article" date="2010" name="PLoS Genet.">
        <title>Genome sequence of the plant growth promoting endophytic bacterium Enterobacter sp. 638.</title>
        <authorList>
            <person name="Taghavi S."/>
            <person name="van der Lelie D."/>
            <person name="Hoffman A."/>
            <person name="Zhang Y.B."/>
            <person name="Walla M.D."/>
            <person name="Vangronsveld J."/>
            <person name="Newman L."/>
            <person name="Monchy S."/>
        </authorList>
    </citation>
    <scope>NUCLEOTIDE SEQUENCE [LARGE SCALE GENOMIC DNA]</scope>
    <source>
        <strain>638</strain>
    </source>
</reference>
<keyword id="KW-0067">ATP-binding</keyword>
<keyword id="KW-0436">Ligase</keyword>
<keyword id="KW-0460">Magnesium</keyword>
<keyword id="KW-0479">Metal-binding</keyword>
<keyword id="KW-0547">Nucleotide-binding</keyword>
<keyword id="KW-0816">Tricarboxylic acid cycle</keyword>
<feature type="chain" id="PRO_1000082080" description="Succinate--CoA ligase [ADP-forming] subunit beta">
    <location>
        <begin position="1"/>
        <end position="388"/>
    </location>
</feature>
<feature type="domain" description="ATP-grasp" evidence="1">
    <location>
        <begin position="9"/>
        <end position="244"/>
    </location>
</feature>
<feature type="binding site" evidence="1">
    <location>
        <position position="46"/>
    </location>
    <ligand>
        <name>ATP</name>
        <dbReference type="ChEBI" id="CHEBI:30616"/>
    </ligand>
</feature>
<feature type="binding site" evidence="1">
    <location>
        <begin position="53"/>
        <end position="55"/>
    </location>
    <ligand>
        <name>ATP</name>
        <dbReference type="ChEBI" id="CHEBI:30616"/>
    </ligand>
</feature>
<feature type="binding site" evidence="1">
    <location>
        <position position="99"/>
    </location>
    <ligand>
        <name>ATP</name>
        <dbReference type="ChEBI" id="CHEBI:30616"/>
    </ligand>
</feature>
<feature type="binding site" evidence="1">
    <location>
        <position position="102"/>
    </location>
    <ligand>
        <name>ATP</name>
        <dbReference type="ChEBI" id="CHEBI:30616"/>
    </ligand>
</feature>
<feature type="binding site" evidence="1">
    <location>
        <position position="107"/>
    </location>
    <ligand>
        <name>ATP</name>
        <dbReference type="ChEBI" id="CHEBI:30616"/>
    </ligand>
</feature>
<feature type="binding site" evidence="1">
    <location>
        <position position="199"/>
    </location>
    <ligand>
        <name>Mg(2+)</name>
        <dbReference type="ChEBI" id="CHEBI:18420"/>
    </ligand>
</feature>
<feature type="binding site" evidence="1">
    <location>
        <position position="213"/>
    </location>
    <ligand>
        <name>Mg(2+)</name>
        <dbReference type="ChEBI" id="CHEBI:18420"/>
    </ligand>
</feature>
<feature type="binding site" evidence="1">
    <location>
        <position position="264"/>
    </location>
    <ligand>
        <name>substrate</name>
        <note>ligand shared with subunit alpha</note>
    </ligand>
</feature>
<feature type="binding site" evidence="1">
    <location>
        <begin position="321"/>
        <end position="323"/>
    </location>
    <ligand>
        <name>substrate</name>
        <note>ligand shared with subunit alpha</note>
    </ligand>
</feature>
<protein>
    <recommendedName>
        <fullName evidence="1">Succinate--CoA ligase [ADP-forming] subunit beta</fullName>
        <ecNumber evidence="1">6.2.1.5</ecNumber>
    </recommendedName>
    <alternativeName>
        <fullName evidence="1">Succinyl-CoA synthetase subunit beta</fullName>
        <shortName evidence="1">SCS-beta</shortName>
    </alternativeName>
</protein>
<accession>A4W879</accession>
<comment type="function">
    <text evidence="1">Succinyl-CoA synthetase functions in the citric acid cycle (TCA), coupling the hydrolysis of succinyl-CoA to the synthesis of either ATP or GTP and thus represents the only step of substrate-level phosphorylation in the TCA. The beta subunit provides nucleotide specificity of the enzyme and binds the substrate succinate, while the binding sites for coenzyme A and phosphate are found in the alpha subunit.</text>
</comment>
<comment type="catalytic activity">
    <reaction evidence="1">
        <text>succinate + ATP + CoA = succinyl-CoA + ADP + phosphate</text>
        <dbReference type="Rhea" id="RHEA:17661"/>
        <dbReference type="ChEBI" id="CHEBI:30031"/>
        <dbReference type="ChEBI" id="CHEBI:30616"/>
        <dbReference type="ChEBI" id="CHEBI:43474"/>
        <dbReference type="ChEBI" id="CHEBI:57287"/>
        <dbReference type="ChEBI" id="CHEBI:57292"/>
        <dbReference type="ChEBI" id="CHEBI:456216"/>
        <dbReference type="EC" id="6.2.1.5"/>
    </reaction>
    <physiologicalReaction direction="right-to-left" evidence="1">
        <dbReference type="Rhea" id="RHEA:17663"/>
    </physiologicalReaction>
</comment>
<comment type="catalytic activity">
    <reaction evidence="1">
        <text>GTP + succinate + CoA = succinyl-CoA + GDP + phosphate</text>
        <dbReference type="Rhea" id="RHEA:22120"/>
        <dbReference type="ChEBI" id="CHEBI:30031"/>
        <dbReference type="ChEBI" id="CHEBI:37565"/>
        <dbReference type="ChEBI" id="CHEBI:43474"/>
        <dbReference type="ChEBI" id="CHEBI:57287"/>
        <dbReference type="ChEBI" id="CHEBI:57292"/>
        <dbReference type="ChEBI" id="CHEBI:58189"/>
    </reaction>
    <physiologicalReaction direction="right-to-left" evidence="1">
        <dbReference type="Rhea" id="RHEA:22122"/>
    </physiologicalReaction>
</comment>
<comment type="cofactor">
    <cofactor evidence="1">
        <name>Mg(2+)</name>
        <dbReference type="ChEBI" id="CHEBI:18420"/>
    </cofactor>
    <text evidence="1">Binds 1 Mg(2+) ion per subunit.</text>
</comment>
<comment type="pathway">
    <text evidence="1">Carbohydrate metabolism; tricarboxylic acid cycle; succinate from succinyl-CoA (ligase route): step 1/1.</text>
</comment>
<comment type="subunit">
    <text evidence="1">Heterotetramer of two alpha and two beta subunits.</text>
</comment>
<comment type="similarity">
    <text evidence="1">Belongs to the succinate/malate CoA ligase beta subunit family.</text>
</comment>
<gene>
    <name evidence="1" type="primary">sucC</name>
    <name type="ordered locus">Ent638_1228</name>
</gene>
<evidence type="ECO:0000255" key="1">
    <source>
        <dbReference type="HAMAP-Rule" id="MF_00558"/>
    </source>
</evidence>
<dbReference type="EC" id="6.2.1.5" evidence="1"/>
<dbReference type="EMBL" id="CP000653">
    <property type="protein sequence ID" value="ABP59909.1"/>
    <property type="molecule type" value="Genomic_DNA"/>
</dbReference>
<dbReference type="RefSeq" id="WP_012016628.1">
    <property type="nucleotide sequence ID" value="NC_009436.1"/>
</dbReference>
<dbReference type="SMR" id="A4W879"/>
<dbReference type="STRING" id="399742.Ent638_1228"/>
<dbReference type="KEGG" id="ent:Ent638_1228"/>
<dbReference type="eggNOG" id="COG0045">
    <property type="taxonomic scope" value="Bacteria"/>
</dbReference>
<dbReference type="HOGENOM" id="CLU_037430_4_0_6"/>
<dbReference type="OrthoDB" id="9802602at2"/>
<dbReference type="UniPathway" id="UPA00223">
    <property type="reaction ID" value="UER00999"/>
</dbReference>
<dbReference type="Proteomes" id="UP000000230">
    <property type="component" value="Chromosome"/>
</dbReference>
<dbReference type="GO" id="GO:0005829">
    <property type="term" value="C:cytosol"/>
    <property type="evidence" value="ECO:0007669"/>
    <property type="project" value="TreeGrafter"/>
</dbReference>
<dbReference type="GO" id="GO:0042709">
    <property type="term" value="C:succinate-CoA ligase complex"/>
    <property type="evidence" value="ECO:0007669"/>
    <property type="project" value="TreeGrafter"/>
</dbReference>
<dbReference type="GO" id="GO:0005524">
    <property type="term" value="F:ATP binding"/>
    <property type="evidence" value="ECO:0007669"/>
    <property type="project" value="UniProtKB-UniRule"/>
</dbReference>
<dbReference type="GO" id="GO:0000287">
    <property type="term" value="F:magnesium ion binding"/>
    <property type="evidence" value="ECO:0007669"/>
    <property type="project" value="UniProtKB-UniRule"/>
</dbReference>
<dbReference type="GO" id="GO:0004775">
    <property type="term" value="F:succinate-CoA ligase (ADP-forming) activity"/>
    <property type="evidence" value="ECO:0007669"/>
    <property type="project" value="UniProtKB-UniRule"/>
</dbReference>
<dbReference type="GO" id="GO:0004776">
    <property type="term" value="F:succinate-CoA ligase (GDP-forming) activity"/>
    <property type="evidence" value="ECO:0007669"/>
    <property type="project" value="RHEA"/>
</dbReference>
<dbReference type="GO" id="GO:0006104">
    <property type="term" value="P:succinyl-CoA metabolic process"/>
    <property type="evidence" value="ECO:0007669"/>
    <property type="project" value="TreeGrafter"/>
</dbReference>
<dbReference type="GO" id="GO:0006099">
    <property type="term" value="P:tricarboxylic acid cycle"/>
    <property type="evidence" value="ECO:0007669"/>
    <property type="project" value="UniProtKB-UniRule"/>
</dbReference>
<dbReference type="FunFam" id="3.30.1490.20:FF:000002">
    <property type="entry name" value="Succinate--CoA ligase [ADP-forming] subunit beta"/>
    <property type="match status" value="1"/>
</dbReference>
<dbReference type="FunFam" id="3.30.470.20:FF:000002">
    <property type="entry name" value="Succinate--CoA ligase [ADP-forming] subunit beta"/>
    <property type="match status" value="1"/>
</dbReference>
<dbReference type="FunFam" id="3.40.50.261:FF:000001">
    <property type="entry name" value="Succinate--CoA ligase [ADP-forming] subunit beta"/>
    <property type="match status" value="1"/>
</dbReference>
<dbReference type="Gene3D" id="3.30.1490.20">
    <property type="entry name" value="ATP-grasp fold, A domain"/>
    <property type="match status" value="1"/>
</dbReference>
<dbReference type="Gene3D" id="3.30.470.20">
    <property type="entry name" value="ATP-grasp fold, B domain"/>
    <property type="match status" value="1"/>
</dbReference>
<dbReference type="Gene3D" id="3.40.50.261">
    <property type="entry name" value="Succinyl-CoA synthetase domains"/>
    <property type="match status" value="1"/>
</dbReference>
<dbReference type="HAMAP" id="MF_00558">
    <property type="entry name" value="Succ_CoA_beta"/>
    <property type="match status" value="1"/>
</dbReference>
<dbReference type="InterPro" id="IPR011761">
    <property type="entry name" value="ATP-grasp"/>
</dbReference>
<dbReference type="InterPro" id="IPR013650">
    <property type="entry name" value="ATP-grasp_succ-CoA_synth-type"/>
</dbReference>
<dbReference type="InterPro" id="IPR013815">
    <property type="entry name" value="ATP_grasp_subdomain_1"/>
</dbReference>
<dbReference type="InterPro" id="IPR017866">
    <property type="entry name" value="Succ-CoA_synthase_bsu_CS"/>
</dbReference>
<dbReference type="InterPro" id="IPR005811">
    <property type="entry name" value="SUCC_ACL_C"/>
</dbReference>
<dbReference type="InterPro" id="IPR005809">
    <property type="entry name" value="Succ_CoA_ligase-like_bsu"/>
</dbReference>
<dbReference type="InterPro" id="IPR016102">
    <property type="entry name" value="Succinyl-CoA_synth-like"/>
</dbReference>
<dbReference type="NCBIfam" id="NF001913">
    <property type="entry name" value="PRK00696.1"/>
    <property type="match status" value="1"/>
</dbReference>
<dbReference type="NCBIfam" id="TIGR01016">
    <property type="entry name" value="sucCoAbeta"/>
    <property type="match status" value="1"/>
</dbReference>
<dbReference type="PANTHER" id="PTHR11815:SF10">
    <property type="entry name" value="SUCCINATE--COA LIGASE [GDP-FORMING] SUBUNIT BETA, MITOCHONDRIAL"/>
    <property type="match status" value="1"/>
</dbReference>
<dbReference type="PANTHER" id="PTHR11815">
    <property type="entry name" value="SUCCINYL-COA SYNTHETASE BETA CHAIN"/>
    <property type="match status" value="1"/>
</dbReference>
<dbReference type="Pfam" id="PF08442">
    <property type="entry name" value="ATP-grasp_2"/>
    <property type="match status" value="1"/>
</dbReference>
<dbReference type="Pfam" id="PF00549">
    <property type="entry name" value="Ligase_CoA"/>
    <property type="match status" value="1"/>
</dbReference>
<dbReference type="PIRSF" id="PIRSF001554">
    <property type="entry name" value="SucCS_beta"/>
    <property type="match status" value="1"/>
</dbReference>
<dbReference type="SUPFAM" id="SSF56059">
    <property type="entry name" value="Glutathione synthetase ATP-binding domain-like"/>
    <property type="match status" value="1"/>
</dbReference>
<dbReference type="SUPFAM" id="SSF52210">
    <property type="entry name" value="Succinyl-CoA synthetase domains"/>
    <property type="match status" value="1"/>
</dbReference>
<dbReference type="PROSITE" id="PS50975">
    <property type="entry name" value="ATP_GRASP"/>
    <property type="match status" value="1"/>
</dbReference>
<dbReference type="PROSITE" id="PS01217">
    <property type="entry name" value="SUCCINYL_COA_LIG_3"/>
    <property type="match status" value="1"/>
</dbReference>
<proteinExistence type="inferred from homology"/>
<organism>
    <name type="scientific">Enterobacter sp. (strain 638)</name>
    <dbReference type="NCBI Taxonomy" id="399742"/>
    <lineage>
        <taxon>Bacteria</taxon>
        <taxon>Pseudomonadati</taxon>
        <taxon>Pseudomonadota</taxon>
        <taxon>Gammaproteobacteria</taxon>
        <taxon>Enterobacterales</taxon>
        <taxon>Enterobacteriaceae</taxon>
        <taxon>Enterobacter</taxon>
    </lineage>
</organism>
<name>SUCC_ENT38</name>
<sequence length="388" mass="41521">MNLHEYQAKQLFARYGLPAPVGYACNTPREAEEAASKIGSGPWVVKCQVHAGGRGKAGGVKVVKSKEEIRAFAEHWLGKRLVTYQTDANGQPVNQILVEAATDIAKELYLGAVVDRSSRRVVFMASTEGGVEIEKVAEETPHLIHKVAIDPLAGPMPYQGRELAFKLGLEGKLVQQFTKIFMGLAKIFLERDLALIEINPLVITTQGDLICLDGKLGADGNALFRQSDLREMRDQSQEDPREAQAAQWELNYVALDGNIGCMVNGAGLAMGTMDIVKLHGGEPANFLDVGGGATKERVTEAFKIILSDDKVKAVLVNIFGGIVRCDLIADGIIGAVEEVGVNVPVVVRLEGNNAELGAKKLADSGLNIIAAKSLTDAAQQVVAAVEGK</sequence>